<evidence type="ECO:0000250" key="1"/>
<evidence type="ECO:0000255" key="2">
    <source>
        <dbReference type="HAMAP-Rule" id="MF_01109"/>
    </source>
</evidence>
<name>OTC_SYNAS</name>
<gene>
    <name evidence="2" type="primary">argF</name>
    <name type="ordered locus">SYNAS_14280</name>
    <name type="ORF">SYN_02156</name>
</gene>
<feature type="chain" id="PRO_1000065130" description="Ornithine carbamoyltransferase">
    <location>
        <begin position="1"/>
        <end position="302"/>
    </location>
</feature>
<feature type="binding site" evidence="2">
    <location>
        <begin position="52"/>
        <end position="55"/>
    </location>
    <ligand>
        <name>carbamoyl phosphate</name>
        <dbReference type="ChEBI" id="CHEBI:58228"/>
    </ligand>
</feature>
<feature type="binding site" evidence="2">
    <location>
        <position position="79"/>
    </location>
    <ligand>
        <name>carbamoyl phosphate</name>
        <dbReference type="ChEBI" id="CHEBI:58228"/>
    </ligand>
</feature>
<feature type="binding site" evidence="2">
    <location>
        <position position="103"/>
    </location>
    <ligand>
        <name>carbamoyl phosphate</name>
        <dbReference type="ChEBI" id="CHEBI:58228"/>
    </ligand>
</feature>
<feature type="binding site" evidence="2">
    <location>
        <begin position="130"/>
        <end position="133"/>
    </location>
    <ligand>
        <name>carbamoyl phosphate</name>
        <dbReference type="ChEBI" id="CHEBI:58228"/>
    </ligand>
</feature>
<feature type="binding site" evidence="2">
    <location>
        <position position="161"/>
    </location>
    <ligand>
        <name>L-ornithine</name>
        <dbReference type="ChEBI" id="CHEBI:46911"/>
    </ligand>
</feature>
<feature type="binding site" evidence="2">
    <location>
        <position position="222"/>
    </location>
    <ligand>
        <name>L-ornithine</name>
        <dbReference type="ChEBI" id="CHEBI:46911"/>
    </ligand>
</feature>
<feature type="binding site" evidence="2">
    <location>
        <begin position="226"/>
        <end position="227"/>
    </location>
    <ligand>
        <name>L-ornithine</name>
        <dbReference type="ChEBI" id="CHEBI:46911"/>
    </ligand>
</feature>
<feature type="binding site" evidence="2">
    <location>
        <begin position="262"/>
        <end position="263"/>
    </location>
    <ligand>
        <name>carbamoyl phosphate</name>
        <dbReference type="ChEBI" id="CHEBI:58228"/>
    </ligand>
</feature>
<feature type="binding site" evidence="2">
    <location>
        <position position="290"/>
    </location>
    <ligand>
        <name>carbamoyl phosphate</name>
        <dbReference type="ChEBI" id="CHEBI:58228"/>
    </ligand>
</feature>
<sequence>MKKDLLSIYDLEAGDFKAIFEKARHLKSVHEQGVAYTPLKGKTLGMIFDKSSTRTRISFEVGMYQLGGLALFLSNRDTQLGRGETVADSARIMSRYLNGIMIRTFSHLIIEEFAAHATIPVINGLTDLLHPCQILSDLFTIIEKKGSYERLKIVYVGDGNNIANSWINAAARLPFHLALSCPEGYDPDSGILDRGVKEAKEGVSLMRDPYEAVRNADVVYTDVWASMGQEAEQEARARVFRPYQINEALLSPAKKDAIVMHCLPAHRGEEITAAVLDGPRSVIIDQAENRLHVQKAILEILI</sequence>
<accession>Q2LT98</accession>
<organism>
    <name type="scientific">Syntrophus aciditrophicus (strain SB)</name>
    <dbReference type="NCBI Taxonomy" id="56780"/>
    <lineage>
        <taxon>Bacteria</taxon>
        <taxon>Pseudomonadati</taxon>
        <taxon>Thermodesulfobacteriota</taxon>
        <taxon>Syntrophia</taxon>
        <taxon>Syntrophales</taxon>
        <taxon>Syntrophaceae</taxon>
        <taxon>Syntrophus</taxon>
    </lineage>
</organism>
<comment type="function">
    <text evidence="1">Reversibly catalyzes the transfer of the carbamoyl group from carbamoyl phosphate (CP) to the N(epsilon) atom of ornithine (ORN) to produce L-citrulline.</text>
</comment>
<comment type="catalytic activity">
    <reaction evidence="2">
        <text>carbamoyl phosphate + L-ornithine = L-citrulline + phosphate + H(+)</text>
        <dbReference type="Rhea" id="RHEA:19513"/>
        <dbReference type="ChEBI" id="CHEBI:15378"/>
        <dbReference type="ChEBI" id="CHEBI:43474"/>
        <dbReference type="ChEBI" id="CHEBI:46911"/>
        <dbReference type="ChEBI" id="CHEBI:57743"/>
        <dbReference type="ChEBI" id="CHEBI:58228"/>
        <dbReference type="EC" id="2.1.3.3"/>
    </reaction>
</comment>
<comment type="pathway">
    <text evidence="2">Amino-acid biosynthesis; L-arginine biosynthesis; L-arginine from L-ornithine and carbamoyl phosphate: step 1/3.</text>
</comment>
<comment type="subcellular location">
    <subcellularLocation>
        <location evidence="2">Cytoplasm</location>
    </subcellularLocation>
</comment>
<comment type="similarity">
    <text evidence="2">Belongs to the aspartate/ornithine carbamoyltransferase superfamily. OTCase family.</text>
</comment>
<proteinExistence type="inferred from homology"/>
<protein>
    <recommendedName>
        <fullName evidence="2">Ornithine carbamoyltransferase</fullName>
        <shortName evidence="2">OTCase</shortName>
        <ecNumber evidence="2">2.1.3.3</ecNumber>
    </recommendedName>
</protein>
<dbReference type="EC" id="2.1.3.3" evidence="2"/>
<dbReference type="EMBL" id="CP000252">
    <property type="protein sequence ID" value="ABC77307.1"/>
    <property type="molecule type" value="Genomic_DNA"/>
</dbReference>
<dbReference type="RefSeq" id="WP_011417329.1">
    <property type="nucleotide sequence ID" value="NC_007759.1"/>
</dbReference>
<dbReference type="SMR" id="Q2LT98"/>
<dbReference type="FunCoup" id="Q2LT98">
    <property type="interactions" value="406"/>
</dbReference>
<dbReference type="STRING" id="56780.SYN_02156"/>
<dbReference type="KEGG" id="sat:SYN_02156"/>
<dbReference type="eggNOG" id="COG0078">
    <property type="taxonomic scope" value="Bacteria"/>
</dbReference>
<dbReference type="HOGENOM" id="CLU_043846_3_2_7"/>
<dbReference type="InParanoid" id="Q2LT98"/>
<dbReference type="OrthoDB" id="9802587at2"/>
<dbReference type="UniPathway" id="UPA00068">
    <property type="reaction ID" value="UER00112"/>
</dbReference>
<dbReference type="Proteomes" id="UP000001933">
    <property type="component" value="Chromosome"/>
</dbReference>
<dbReference type="GO" id="GO:0005737">
    <property type="term" value="C:cytoplasm"/>
    <property type="evidence" value="ECO:0007669"/>
    <property type="project" value="UniProtKB-SubCell"/>
</dbReference>
<dbReference type="GO" id="GO:0016597">
    <property type="term" value="F:amino acid binding"/>
    <property type="evidence" value="ECO:0007669"/>
    <property type="project" value="InterPro"/>
</dbReference>
<dbReference type="GO" id="GO:0004585">
    <property type="term" value="F:ornithine carbamoyltransferase activity"/>
    <property type="evidence" value="ECO:0007669"/>
    <property type="project" value="UniProtKB-UniRule"/>
</dbReference>
<dbReference type="GO" id="GO:0042450">
    <property type="term" value="P:arginine biosynthetic process via ornithine"/>
    <property type="evidence" value="ECO:0007669"/>
    <property type="project" value="TreeGrafter"/>
</dbReference>
<dbReference type="GO" id="GO:0019240">
    <property type="term" value="P:citrulline biosynthetic process"/>
    <property type="evidence" value="ECO:0007669"/>
    <property type="project" value="TreeGrafter"/>
</dbReference>
<dbReference type="GO" id="GO:0006526">
    <property type="term" value="P:L-arginine biosynthetic process"/>
    <property type="evidence" value="ECO:0007669"/>
    <property type="project" value="UniProtKB-UniRule"/>
</dbReference>
<dbReference type="FunFam" id="3.40.50.1370:FF:000008">
    <property type="entry name" value="Ornithine carbamoyltransferase"/>
    <property type="match status" value="1"/>
</dbReference>
<dbReference type="Gene3D" id="3.40.50.1370">
    <property type="entry name" value="Aspartate/ornithine carbamoyltransferase"/>
    <property type="match status" value="2"/>
</dbReference>
<dbReference type="HAMAP" id="MF_01109">
    <property type="entry name" value="OTCase"/>
    <property type="match status" value="1"/>
</dbReference>
<dbReference type="InterPro" id="IPR006132">
    <property type="entry name" value="Asp/Orn_carbamoyltranf_P-bd"/>
</dbReference>
<dbReference type="InterPro" id="IPR006130">
    <property type="entry name" value="Asp/Orn_carbamoylTrfase"/>
</dbReference>
<dbReference type="InterPro" id="IPR036901">
    <property type="entry name" value="Asp/Orn_carbamoylTrfase_sf"/>
</dbReference>
<dbReference type="InterPro" id="IPR006131">
    <property type="entry name" value="Asp_carbamoyltransf_Asp/Orn-bd"/>
</dbReference>
<dbReference type="InterPro" id="IPR002292">
    <property type="entry name" value="Orn/put_carbamltrans"/>
</dbReference>
<dbReference type="InterPro" id="IPR024904">
    <property type="entry name" value="OTCase_ArgI"/>
</dbReference>
<dbReference type="NCBIfam" id="TIGR00658">
    <property type="entry name" value="orni_carb_tr"/>
    <property type="match status" value="1"/>
</dbReference>
<dbReference type="NCBIfam" id="NF001986">
    <property type="entry name" value="PRK00779.1"/>
    <property type="match status" value="1"/>
</dbReference>
<dbReference type="PANTHER" id="PTHR45753">
    <property type="entry name" value="ORNITHINE CARBAMOYLTRANSFERASE, MITOCHONDRIAL"/>
    <property type="match status" value="1"/>
</dbReference>
<dbReference type="PANTHER" id="PTHR45753:SF3">
    <property type="entry name" value="ORNITHINE TRANSCARBAMYLASE, MITOCHONDRIAL"/>
    <property type="match status" value="1"/>
</dbReference>
<dbReference type="Pfam" id="PF00185">
    <property type="entry name" value="OTCace"/>
    <property type="match status" value="1"/>
</dbReference>
<dbReference type="Pfam" id="PF02729">
    <property type="entry name" value="OTCace_N"/>
    <property type="match status" value="1"/>
</dbReference>
<dbReference type="PRINTS" id="PR00100">
    <property type="entry name" value="AOTCASE"/>
</dbReference>
<dbReference type="PRINTS" id="PR00102">
    <property type="entry name" value="OTCASE"/>
</dbReference>
<dbReference type="SUPFAM" id="SSF53671">
    <property type="entry name" value="Aspartate/ornithine carbamoyltransferase"/>
    <property type="match status" value="1"/>
</dbReference>
<dbReference type="PROSITE" id="PS00097">
    <property type="entry name" value="CARBAMOYLTRANSFERASE"/>
    <property type="match status" value="1"/>
</dbReference>
<keyword id="KW-0028">Amino-acid biosynthesis</keyword>
<keyword id="KW-0055">Arginine biosynthesis</keyword>
<keyword id="KW-0963">Cytoplasm</keyword>
<keyword id="KW-1185">Reference proteome</keyword>
<keyword id="KW-0808">Transferase</keyword>
<reference key="1">
    <citation type="journal article" date="2007" name="Proc. Natl. Acad. Sci. U.S.A.">
        <title>The genome of Syntrophus aciditrophicus: life at the thermodynamic limit of microbial growth.</title>
        <authorList>
            <person name="McInerney M.J."/>
            <person name="Rohlin L."/>
            <person name="Mouttaki H."/>
            <person name="Kim U."/>
            <person name="Krupp R.S."/>
            <person name="Rios-Hernandez L."/>
            <person name="Sieber J."/>
            <person name="Struchtemeyer C.G."/>
            <person name="Bhattacharyya A."/>
            <person name="Campbell J.W."/>
            <person name="Gunsalus R.P."/>
        </authorList>
    </citation>
    <scope>NUCLEOTIDE SEQUENCE [LARGE SCALE GENOMIC DNA]</scope>
    <source>
        <strain>SB</strain>
    </source>
</reference>